<reference key="1">
    <citation type="journal article" date="2005" name="Nucleic Acids Res.">
        <title>Genome dynamics and diversity of Shigella species, the etiologic agents of bacillary dysentery.</title>
        <authorList>
            <person name="Yang F."/>
            <person name="Yang J."/>
            <person name="Zhang X."/>
            <person name="Chen L."/>
            <person name="Jiang Y."/>
            <person name="Yan Y."/>
            <person name="Tang X."/>
            <person name="Wang J."/>
            <person name="Xiong Z."/>
            <person name="Dong J."/>
            <person name="Xue Y."/>
            <person name="Zhu Y."/>
            <person name="Xu X."/>
            <person name="Sun L."/>
            <person name="Chen S."/>
            <person name="Nie H."/>
            <person name="Peng J."/>
            <person name="Xu J."/>
            <person name="Wang Y."/>
            <person name="Yuan Z."/>
            <person name="Wen Y."/>
            <person name="Yao Z."/>
            <person name="Shen Y."/>
            <person name="Qiang B."/>
            <person name="Hou Y."/>
            <person name="Yu J."/>
            <person name="Jin Q."/>
        </authorList>
    </citation>
    <scope>NUCLEOTIDE SEQUENCE [LARGE SCALE GENOMIC DNA]</scope>
    <source>
        <strain>Ss046</strain>
    </source>
</reference>
<name>CAIE_SHISS</name>
<keyword id="KW-1185">Reference proteome</keyword>
<keyword id="KW-0677">Repeat</keyword>
<keyword id="KW-0808">Transferase</keyword>
<dbReference type="EMBL" id="CP000038">
    <property type="protein sequence ID" value="AAZ86838.1"/>
    <property type="status" value="ALT_INIT"/>
    <property type="molecule type" value="Genomic_DNA"/>
</dbReference>
<dbReference type="RefSeq" id="WP_000122876.1">
    <property type="nucleotide sequence ID" value="NC_007384.1"/>
</dbReference>
<dbReference type="SMR" id="Q3Z5X4"/>
<dbReference type="GeneID" id="93777400"/>
<dbReference type="KEGG" id="ssn:SSON_0041"/>
<dbReference type="HOGENOM" id="CLU_064827_4_2_6"/>
<dbReference type="UniPathway" id="UPA00117"/>
<dbReference type="Proteomes" id="UP000002529">
    <property type="component" value="Chromosome"/>
</dbReference>
<dbReference type="GO" id="GO:0016740">
    <property type="term" value="F:transferase activity"/>
    <property type="evidence" value="ECO:0007669"/>
    <property type="project" value="UniProtKB-KW"/>
</dbReference>
<dbReference type="GO" id="GO:0009437">
    <property type="term" value="P:carnitine metabolic process"/>
    <property type="evidence" value="ECO:0007669"/>
    <property type="project" value="UniProtKB-UniRule"/>
</dbReference>
<dbReference type="CDD" id="cd04745">
    <property type="entry name" value="LbH_paaY_like"/>
    <property type="match status" value="1"/>
</dbReference>
<dbReference type="FunFam" id="2.160.10.10:FF:000012">
    <property type="entry name" value="Carnitine operon protein CaiE"/>
    <property type="match status" value="1"/>
</dbReference>
<dbReference type="Gene3D" id="2.160.10.10">
    <property type="entry name" value="Hexapeptide repeat proteins"/>
    <property type="match status" value="1"/>
</dbReference>
<dbReference type="HAMAP" id="MF_01525">
    <property type="entry name" value="CaiE"/>
    <property type="match status" value="1"/>
</dbReference>
<dbReference type="InterPro" id="IPR023446">
    <property type="entry name" value="CaiE"/>
</dbReference>
<dbReference type="InterPro" id="IPR001451">
    <property type="entry name" value="Hexapep"/>
</dbReference>
<dbReference type="InterPro" id="IPR050484">
    <property type="entry name" value="Transf_Hexapept/Carb_Anhydrase"/>
</dbReference>
<dbReference type="InterPro" id="IPR011004">
    <property type="entry name" value="Trimer_LpxA-like_sf"/>
</dbReference>
<dbReference type="NCBIfam" id="NF010150">
    <property type="entry name" value="PRK13627.1"/>
    <property type="match status" value="1"/>
</dbReference>
<dbReference type="PANTHER" id="PTHR13061">
    <property type="entry name" value="DYNACTIN SUBUNIT P25"/>
    <property type="match status" value="1"/>
</dbReference>
<dbReference type="PANTHER" id="PTHR13061:SF29">
    <property type="entry name" value="GAMMA CARBONIC ANHYDRASE-LIKE 1, MITOCHONDRIAL-RELATED"/>
    <property type="match status" value="1"/>
</dbReference>
<dbReference type="Pfam" id="PF00132">
    <property type="entry name" value="Hexapep"/>
    <property type="match status" value="1"/>
</dbReference>
<dbReference type="SUPFAM" id="SSF51161">
    <property type="entry name" value="Trimeric LpxA-like enzymes"/>
    <property type="match status" value="1"/>
</dbReference>
<feature type="chain" id="PRO_0000292728" description="Carnitine operon protein CaiE">
    <location>
        <begin position="1"/>
        <end position="196"/>
    </location>
</feature>
<feature type="region of interest" description="Disordered" evidence="2">
    <location>
        <begin position="173"/>
        <end position="196"/>
    </location>
</feature>
<feature type="compositionally biased region" description="Polar residues" evidence="2">
    <location>
        <begin position="187"/>
        <end position="196"/>
    </location>
</feature>
<accession>Q3Z5X4</accession>
<evidence type="ECO:0000255" key="1">
    <source>
        <dbReference type="HAMAP-Rule" id="MF_01525"/>
    </source>
</evidence>
<evidence type="ECO:0000256" key="2">
    <source>
        <dbReference type="SAM" id="MobiDB-lite"/>
    </source>
</evidence>
<evidence type="ECO:0000305" key="3"/>
<sequence>MSYYAFEGLIPVVHPTAFVHPSAVLIGDVIVGAGVYIGPLASLRGDYGRLIVQAGANIQDGCIMHGYCDTDTIVGENGHIGHGAILHGCVIGRDALVGMNSVIMDGAVIGEESIVAAMSFVKAGFHGEKRQLLMGTPARAVRSVSDDELHWKRLNTKEYQDLVGRCHASLHETQPLRQMEENRPRLQGTTDVTPKR</sequence>
<organism>
    <name type="scientific">Shigella sonnei (strain Ss046)</name>
    <dbReference type="NCBI Taxonomy" id="300269"/>
    <lineage>
        <taxon>Bacteria</taxon>
        <taxon>Pseudomonadati</taxon>
        <taxon>Pseudomonadota</taxon>
        <taxon>Gammaproteobacteria</taxon>
        <taxon>Enterobacterales</taxon>
        <taxon>Enterobacteriaceae</taxon>
        <taxon>Shigella</taxon>
    </lineage>
</organism>
<proteinExistence type="inferred from homology"/>
<gene>
    <name evidence="1" type="primary">caiE</name>
    <name type="ordered locus">SSON_0041</name>
</gene>
<protein>
    <recommendedName>
        <fullName evidence="1">Carnitine operon protein CaiE</fullName>
    </recommendedName>
</protein>
<comment type="function">
    <text evidence="1">Overproduction of CaiE stimulates the activity of CaiB and CaiD.</text>
</comment>
<comment type="pathway">
    <text evidence="1">Amine and polyamine metabolism; carnitine metabolism.</text>
</comment>
<comment type="similarity">
    <text evidence="1">Belongs to the transferase hexapeptide repeat family.</text>
</comment>
<comment type="sequence caution" evidence="3">
    <conflict type="erroneous initiation">
        <sequence resource="EMBL-CDS" id="AAZ86838"/>
    </conflict>
</comment>